<protein>
    <recommendedName>
        <fullName evidence="1">Glycine--tRNA ligase beta subunit</fullName>
        <ecNumber evidence="1">6.1.1.14</ecNumber>
    </recommendedName>
    <alternativeName>
        <fullName evidence="1">Glycyl-tRNA synthetase beta subunit</fullName>
        <shortName evidence="1">GlyRS</shortName>
    </alternativeName>
</protein>
<evidence type="ECO:0000255" key="1">
    <source>
        <dbReference type="HAMAP-Rule" id="MF_00255"/>
    </source>
</evidence>
<name>SYGB_TOLAT</name>
<sequence length="690" mass="75072">MATENFLIELGTEELPPKALRKLAQAFADNFTAELDKAGLAHQGVQWFAAPRRLALKVAALADKQADKQVEKRGPAVSAAFDAAGNPTPAAAGWAKSNGIEVAQADRLATDKGEWLVYRANVAGQPTTGLLPAMAATALAGLPIPKPMRWGAKRTQFIRPVHTLCMLFGAELVDGEILGLRSARIIRGHRFMGEAQFEISHADQYPALLLEKGKVQADYETRKAFIKAGAEAAAQQLGGIADIEESLLEEVTSLVEWPVILTATFEEKFLAVPAEALVHTMKGDQKYFPVYDNNGKLLPNFIFVSNIESKDPAQIIQGNERVVRPRLSDAEFFFNTDKKHSLASRLESLDTVLFQQQLGTLKDKSVRIAEMSAFIAAQIGADVEHATRAGLLSKCDLMTNMVMEFTDTQGVMGMHYARHDHEAEDVAVALNEQYMPRFAGDNLPNGLVACAVAIADKLDTLAGIFGIGQAPKGDKDPFALRRAAIGTLRIIVEKQLDLDLVDVVSKAAELYDGKISNKSVVDEVVDFMLGRFRASYQEAGIAVDVIQAVLARRPTRPADFDARVKAVSHFRTLDAAEALAAANKRVSNILAKFDGKLKDSVDAALLQDPAEQVLAQQVAAMETKLAPLFANGEYQLALTELAALREAVDTFFDKVMVMADDEALKLNRLTLLARLQALFLQAADISLLQQ</sequence>
<organism>
    <name type="scientific">Tolumonas auensis (strain DSM 9187 / NBRC 110442 / TA 4)</name>
    <dbReference type="NCBI Taxonomy" id="595494"/>
    <lineage>
        <taxon>Bacteria</taxon>
        <taxon>Pseudomonadati</taxon>
        <taxon>Pseudomonadota</taxon>
        <taxon>Gammaproteobacteria</taxon>
        <taxon>Aeromonadales</taxon>
        <taxon>Aeromonadaceae</taxon>
        <taxon>Tolumonas</taxon>
    </lineage>
</organism>
<keyword id="KW-0030">Aminoacyl-tRNA synthetase</keyword>
<keyword id="KW-0067">ATP-binding</keyword>
<keyword id="KW-0963">Cytoplasm</keyword>
<keyword id="KW-0436">Ligase</keyword>
<keyword id="KW-0547">Nucleotide-binding</keyword>
<keyword id="KW-0648">Protein biosynthesis</keyword>
<keyword id="KW-1185">Reference proteome</keyword>
<comment type="catalytic activity">
    <reaction evidence="1">
        <text>tRNA(Gly) + glycine + ATP = glycyl-tRNA(Gly) + AMP + diphosphate</text>
        <dbReference type="Rhea" id="RHEA:16013"/>
        <dbReference type="Rhea" id="RHEA-COMP:9664"/>
        <dbReference type="Rhea" id="RHEA-COMP:9683"/>
        <dbReference type="ChEBI" id="CHEBI:30616"/>
        <dbReference type="ChEBI" id="CHEBI:33019"/>
        <dbReference type="ChEBI" id="CHEBI:57305"/>
        <dbReference type="ChEBI" id="CHEBI:78442"/>
        <dbReference type="ChEBI" id="CHEBI:78522"/>
        <dbReference type="ChEBI" id="CHEBI:456215"/>
        <dbReference type="EC" id="6.1.1.14"/>
    </reaction>
</comment>
<comment type="subunit">
    <text evidence="1">Tetramer of two alpha and two beta subunits.</text>
</comment>
<comment type="subcellular location">
    <subcellularLocation>
        <location evidence="1">Cytoplasm</location>
    </subcellularLocation>
</comment>
<comment type="similarity">
    <text evidence="1">Belongs to the class-II aminoacyl-tRNA synthetase family.</text>
</comment>
<proteinExistence type="inferred from homology"/>
<gene>
    <name evidence="1" type="primary">glyS</name>
    <name type="ordered locus">Tola_0008</name>
</gene>
<accession>C4L762</accession>
<reference key="1">
    <citation type="submission" date="2009-05" db="EMBL/GenBank/DDBJ databases">
        <title>Complete sequence of Tolumonas auensis DSM 9187.</title>
        <authorList>
            <consortium name="US DOE Joint Genome Institute"/>
            <person name="Lucas S."/>
            <person name="Copeland A."/>
            <person name="Lapidus A."/>
            <person name="Glavina del Rio T."/>
            <person name="Tice H."/>
            <person name="Bruce D."/>
            <person name="Goodwin L."/>
            <person name="Pitluck S."/>
            <person name="Chertkov O."/>
            <person name="Brettin T."/>
            <person name="Detter J.C."/>
            <person name="Han C."/>
            <person name="Larimer F."/>
            <person name="Land M."/>
            <person name="Hauser L."/>
            <person name="Kyrpides N."/>
            <person name="Mikhailova N."/>
            <person name="Spring S."/>
            <person name="Beller H."/>
        </authorList>
    </citation>
    <scope>NUCLEOTIDE SEQUENCE [LARGE SCALE GENOMIC DNA]</scope>
    <source>
        <strain>DSM 9187 / NBRC 110442 / TA 4</strain>
    </source>
</reference>
<dbReference type="EC" id="6.1.1.14" evidence="1"/>
<dbReference type="EMBL" id="CP001616">
    <property type="protein sequence ID" value="ACQ91638.1"/>
    <property type="molecule type" value="Genomic_DNA"/>
</dbReference>
<dbReference type="RefSeq" id="WP_012728238.1">
    <property type="nucleotide sequence ID" value="NC_012691.1"/>
</dbReference>
<dbReference type="SMR" id="C4L762"/>
<dbReference type="STRING" id="595494.Tola_0008"/>
<dbReference type="KEGG" id="tau:Tola_0008"/>
<dbReference type="eggNOG" id="COG0751">
    <property type="taxonomic scope" value="Bacteria"/>
</dbReference>
<dbReference type="HOGENOM" id="CLU_007220_2_2_6"/>
<dbReference type="OrthoDB" id="9775440at2"/>
<dbReference type="Proteomes" id="UP000009073">
    <property type="component" value="Chromosome"/>
</dbReference>
<dbReference type="GO" id="GO:0005829">
    <property type="term" value="C:cytosol"/>
    <property type="evidence" value="ECO:0007669"/>
    <property type="project" value="TreeGrafter"/>
</dbReference>
<dbReference type="GO" id="GO:0004814">
    <property type="term" value="F:arginine-tRNA ligase activity"/>
    <property type="evidence" value="ECO:0007669"/>
    <property type="project" value="InterPro"/>
</dbReference>
<dbReference type="GO" id="GO:0005524">
    <property type="term" value="F:ATP binding"/>
    <property type="evidence" value="ECO:0007669"/>
    <property type="project" value="UniProtKB-UniRule"/>
</dbReference>
<dbReference type="GO" id="GO:0004820">
    <property type="term" value="F:glycine-tRNA ligase activity"/>
    <property type="evidence" value="ECO:0007669"/>
    <property type="project" value="UniProtKB-UniRule"/>
</dbReference>
<dbReference type="GO" id="GO:0006420">
    <property type="term" value="P:arginyl-tRNA aminoacylation"/>
    <property type="evidence" value="ECO:0007669"/>
    <property type="project" value="InterPro"/>
</dbReference>
<dbReference type="GO" id="GO:0006426">
    <property type="term" value="P:glycyl-tRNA aminoacylation"/>
    <property type="evidence" value="ECO:0007669"/>
    <property type="project" value="UniProtKB-UniRule"/>
</dbReference>
<dbReference type="Gene3D" id="1.10.730.10">
    <property type="entry name" value="Isoleucyl-tRNA Synthetase, Domain 1"/>
    <property type="match status" value="1"/>
</dbReference>
<dbReference type="HAMAP" id="MF_00255">
    <property type="entry name" value="Gly_tRNA_synth_beta"/>
    <property type="match status" value="1"/>
</dbReference>
<dbReference type="InterPro" id="IPR008909">
    <property type="entry name" value="DALR_anticod-bd"/>
</dbReference>
<dbReference type="InterPro" id="IPR015944">
    <property type="entry name" value="Gly-tRNA-synth_bsu"/>
</dbReference>
<dbReference type="InterPro" id="IPR006194">
    <property type="entry name" value="Gly-tRNA-synth_heterodimer"/>
</dbReference>
<dbReference type="NCBIfam" id="TIGR00211">
    <property type="entry name" value="glyS"/>
    <property type="match status" value="1"/>
</dbReference>
<dbReference type="PANTHER" id="PTHR30075:SF2">
    <property type="entry name" value="GLYCINE--TRNA LIGASE, CHLOROPLASTIC_MITOCHONDRIAL 2"/>
    <property type="match status" value="1"/>
</dbReference>
<dbReference type="PANTHER" id="PTHR30075">
    <property type="entry name" value="GLYCYL-TRNA SYNTHETASE"/>
    <property type="match status" value="1"/>
</dbReference>
<dbReference type="Pfam" id="PF05746">
    <property type="entry name" value="DALR_1"/>
    <property type="match status" value="1"/>
</dbReference>
<dbReference type="Pfam" id="PF02092">
    <property type="entry name" value="tRNA_synt_2f"/>
    <property type="match status" value="1"/>
</dbReference>
<dbReference type="PRINTS" id="PR01045">
    <property type="entry name" value="TRNASYNTHGB"/>
</dbReference>
<dbReference type="SMART" id="SM00836">
    <property type="entry name" value="DALR_1"/>
    <property type="match status" value="1"/>
</dbReference>
<dbReference type="SUPFAM" id="SSF109604">
    <property type="entry name" value="HD-domain/PDEase-like"/>
    <property type="match status" value="1"/>
</dbReference>
<dbReference type="PROSITE" id="PS50861">
    <property type="entry name" value="AA_TRNA_LIGASE_II_GLYAB"/>
    <property type="match status" value="1"/>
</dbReference>
<feature type="chain" id="PRO_1000204613" description="Glycine--tRNA ligase beta subunit">
    <location>
        <begin position="1"/>
        <end position="690"/>
    </location>
</feature>